<sequence>MRHFLTLKDFSAQEILEILALSKEIKDDLKKGIRPPLMQGKVLGMIFEKSSTRTRVSFESGIYQLGGMGMFLSNRDIQLGRGEPMKDTARVISRMVDMVMIRTSGHERIEEFAKYSQVPVVNGLTDSYHPVQLMADYLTMMEQGKDQNPIVAYVGDGNNMTHSWLMLASKLGFELRVATPRGYEPNLKIFEEAQKIASLSGAKITLTNDPKRAVEGADVVTTDTWASMGQEEEKEKRARDFQGYCVDSALMGLAKSDAIFLHCLPAYRGQEVSEEVLEGPQSLIFDEAENRLHVQKGIMVWLDRKRS</sequence>
<reference key="1">
    <citation type="journal article" date="2003" name="Proc. Natl. Acad. Sci. U.S.A.">
        <title>Complete genome sequence and analysis of Wolinella succinogenes.</title>
        <authorList>
            <person name="Baar C."/>
            <person name="Eppinger M."/>
            <person name="Raddatz G."/>
            <person name="Simon J."/>
            <person name="Lanz C."/>
            <person name="Klimmek O."/>
            <person name="Nandakumar R."/>
            <person name="Gross R."/>
            <person name="Rosinus A."/>
            <person name="Keller H."/>
            <person name="Jagtap P."/>
            <person name="Linke B."/>
            <person name="Meyer F."/>
            <person name="Lederer H."/>
            <person name="Schuster S.C."/>
        </authorList>
    </citation>
    <scope>NUCLEOTIDE SEQUENCE [LARGE SCALE GENOMIC DNA]</scope>
    <source>
        <strain>ATCC 29543 / DSM 1740 / CCUG 13145 / JCM 31913 / LMG 7466 / NCTC 11488 / FDC 602W</strain>
    </source>
</reference>
<proteinExistence type="inferred from homology"/>
<accession>Q7M8B5</accession>
<keyword id="KW-0028">Amino-acid biosynthesis</keyword>
<keyword id="KW-0055">Arginine biosynthesis</keyword>
<keyword id="KW-0963">Cytoplasm</keyword>
<keyword id="KW-1185">Reference proteome</keyword>
<keyword id="KW-0808">Transferase</keyword>
<evidence type="ECO:0000250" key="1"/>
<evidence type="ECO:0000255" key="2">
    <source>
        <dbReference type="HAMAP-Rule" id="MF_01109"/>
    </source>
</evidence>
<dbReference type="EC" id="2.1.3.3" evidence="2"/>
<dbReference type="EMBL" id="BX571661">
    <property type="protein sequence ID" value="CAE10775.1"/>
    <property type="molecule type" value="Genomic_DNA"/>
</dbReference>
<dbReference type="RefSeq" id="WP_011139558.1">
    <property type="nucleotide sequence ID" value="NC_005090.1"/>
</dbReference>
<dbReference type="SMR" id="Q7M8B5"/>
<dbReference type="STRING" id="273121.WS1753"/>
<dbReference type="KEGG" id="wsu:WS1753"/>
<dbReference type="eggNOG" id="COG0078">
    <property type="taxonomic scope" value="Bacteria"/>
</dbReference>
<dbReference type="HOGENOM" id="CLU_043846_3_2_7"/>
<dbReference type="UniPathway" id="UPA00068">
    <property type="reaction ID" value="UER00112"/>
</dbReference>
<dbReference type="Proteomes" id="UP000000422">
    <property type="component" value="Chromosome"/>
</dbReference>
<dbReference type="GO" id="GO:0005737">
    <property type="term" value="C:cytoplasm"/>
    <property type="evidence" value="ECO:0007669"/>
    <property type="project" value="UniProtKB-SubCell"/>
</dbReference>
<dbReference type="GO" id="GO:0016597">
    <property type="term" value="F:amino acid binding"/>
    <property type="evidence" value="ECO:0007669"/>
    <property type="project" value="InterPro"/>
</dbReference>
<dbReference type="GO" id="GO:0004585">
    <property type="term" value="F:ornithine carbamoyltransferase activity"/>
    <property type="evidence" value="ECO:0007669"/>
    <property type="project" value="UniProtKB-UniRule"/>
</dbReference>
<dbReference type="GO" id="GO:0042450">
    <property type="term" value="P:arginine biosynthetic process via ornithine"/>
    <property type="evidence" value="ECO:0007669"/>
    <property type="project" value="TreeGrafter"/>
</dbReference>
<dbReference type="GO" id="GO:0019240">
    <property type="term" value="P:citrulline biosynthetic process"/>
    <property type="evidence" value="ECO:0007669"/>
    <property type="project" value="TreeGrafter"/>
</dbReference>
<dbReference type="GO" id="GO:0006526">
    <property type="term" value="P:L-arginine biosynthetic process"/>
    <property type="evidence" value="ECO:0007669"/>
    <property type="project" value="UniProtKB-UniRule"/>
</dbReference>
<dbReference type="FunFam" id="3.40.50.1370:FF:000008">
    <property type="entry name" value="Ornithine carbamoyltransferase"/>
    <property type="match status" value="1"/>
</dbReference>
<dbReference type="Gene3D" id="3.40.50.1370">
    <property type="entry name" value="Aspartate/ornithine carbamoyltransferase"/>
    <property type="match status" value="2"/>
</dbReference>
<dbReference type="HAMAP" id="MF_01109">
    <property type="entry name" value="OTCase"/>
    <property type="match status" value="1"/>
</dbReference>
<dbReference type="InterPro" id="IPR006132">
    <property type="entry name" value="Asp/Orn_carbamoyltranf_P-bd"/>
</dbReference>
<dbReference type="InterPro" id="IPR006130">
    <property type="entry name" value="Asp/Orn_carbamoylTrfase"/>
</dbReference>
<dbReference type="InterPro" id="IPR036901">
    <property type="entry name" value="Asp/Orn_carbamoylTrfase_sf"/>
</dbReference>
<dbReference type="InterPro" id="IPR006131">
    <property type="entry name" value="Asp_carbamoyltransf_Asp/Orn-bd"/>
</dbReference>
<dbReference type="InterPro" id="IPR002292">
    <property type="entry name" value="Orn/put_carbamltrans"/>
</dbReference>
<dbReference type="InterPro" id="IPR024904">
    <property type="entry name" value="OTCase_ArgI"/>
</dbReference>
<dbReference type="NCBIfam" id="TIGR00658">
    <property type="entry name" value="orni_carb_tr"/>
    <property type="match status" value="1"/>
</dbReference>
<dbReference type="NCBIfam" id="NF001986">
    <property type="entry name" value="PRK00779.1"/>
    <property type="match status" value="1"/>
</dbReference>
<dbReference type="PANTHER" id="PTHR45753">
    <property type="entry name" value="ORNITHINE CARBAMOYLTRANSFERASE, MITOCHONDRIAL"/>
    <property type="match status" value="1"/>
</dbReference>
<dbReference type="PANTHER" id="PTHR45753:SF3">
    <property type="entry name" value="ORNITHINE TRANSCARBAMYLASE, MITOCHONDRIAL"/>
    <property type="match status" value="1"/>
</dbReference>
<dbReference type="Pfam" id="PF00185">
    <property type="entry name" value="OTCace"/>
    <property type="match status" value="1"/>
</dbReference>
<dbReference type="Pfam" id="PF02729">
    <property type="entry name" value="OTCace_N"/>
    <property type="match status" value="1"/>
</dbReference>
<dbReference type="PRINTS" id="PR00100">
    <property type="entry name" value="AOTCASE"/>
</dbReference>
<dbReference type="PRINTS" id="PR00102">
    <property type="entry name" value="OTCASE"/>
</dbReference>
<dbReference type="SUPFAM" id="SSF53671">
    <property type="entry name" value="Aspartate/ornithine carbamoyltransferase"/>
    <property type="match status" value="1"/>
</dbReference>
<dbReference type="PROSITE" id="PS00097">
    <property type="entry name" value="CARBAMOYLTRANSFERASE"/>
    <property type="match status" value="1"/>
</dbReference>
<name>OTC_WOLSU</name>
<gene>
    <name evidence="2" type="primary">argF</name>
    <name type="ordered locus">WS1753</name>
</gene>
<feature type="chain" id="PRO_0000113058" description="Ornithine carbamoyltransferase">
    <location>
        <begin position="1"/>
        <end position="307"/>
    </location>
</feature>
<feature type="binding site" evidence="2">
    <location>
        <begin position="51"/>
        <end position="54"/>
    </location>
    <ligand>
        <name>carbamoyl phosphate</name>
        <dbReference type="ChEBI" id="CHEBI:58228"/>
    </ligand>
</feature>
<feature type="binding site" evidence="2">
    <location>
        <position position="78"/>
    </location>
    <ligand>
        <name>carbamoyl phosphate</name>
        <dbReference type="ChEBI" id="CHEBI:58228"/>
    </ligand>
</feature>
<feature type="binding site" evidence="2">
    <location>
        <position position="102"/>
    </location>
    <ligand>
        <name>carbamoyl phosphate</name>
        <dbReference type="ChEBI" id="CHEBI:58228"/>
    </ligand>
</feature>
<feature type="binding site" evidence="2">
    <location>
        <begin position="129"/>
        <end position="132"/>
    </location>
    <ligand>
        <name>carbamoyl phosphate</name>
        <dbReference type="ChEBI" id="CHEBI:58228"/>
    </ligand>
</feature>
<feature type="binding site" evidence="2">
    <location>
        <position position="159"/>
    </location>
    <ligand>
        <name>L-ornithine</name>
        <dbReference type="ChEBI" id="CHEBI:46911"/>
    </ligand>
</feature>
<feature type="binding site" evidence="2">
    <location>
        <position position="223"/>
    </location>
    <ligand>
        <name>L-ornithine</name>
        <dbReference type="ChEBI" id="CHEBI:46911"/>
    </ligand>
</feature>
<feature type="binding site" evidence="2">
    <location>
        <begin position="227"/>
        <end position="228"/>
    </location>
    <ligand>
        <name>L-ornithine</name>
        <dbReference type="ChEBI" id="CHEBI:46911"/>
    </ligand>
</feature>
<feature type="binding site" evidence="2">
    <location>
        <begin position="263"/>
        <end position="264"/>
    </location>
    <ligand>
        <name>carbamoyl phosphate</name>
        <dbReference type="ChEBI" id="CHEBI:58228"/>
    </ligand>
</feature>
<feature type="binding site" evidence="2">
    <location>
        <position position="291"/>
    </location>
    <ligand>
        <name>carbamoyl phosphate</name>
        <dbReference type="ChEBI" id="CHEBI:58228"/>
    </ligand>
</feature>
<organism>
    <name type="scientific">Wolinella succinogenes (strain ATCC 29543 / DSM 1740 / CCUG 13145 / JCM 31913 / LMG 7466 / NCTC 11488 / FDC 602W)</name>
    <name type="common">Vibrio succinogenes</name>
    <dbReference type="NCBI Taxonomy" id="273121"/>
    <lineage>
        <taxon>Bacteria</taxon>
        <taxon>Pseudomonadati</taxon>
        <taxon>Campylobacterota</taxon>
        <taxon>Epsilonproteobacteria</taxon>
        <taxon>Campylobacterales</taxon>
        <taxon>Helicobacteraceae</taxon>
        <taxon>Wolinella</taxon>
    </lineage>
</organism>
<protein>
    <recommendedName>
        <fullName evidence="2">Ornithine carbamoyltransferase</fullName>
        <shortName evidence="2">OTCase</shortName>
        <ecNumber evidence="2">2.1.3.3</ecNumber>
    </recommendedName>
</protein>
<comment type="function">
    <text evidence="1">Reversibly catalyzes the transfer of the carbamoyl group from carbamoyl phosphate (CP) to the N(epsilon) atom of ornithine (ORN) to produce L-citrulline.</text>
</comment>
<comment type="catalytic activity">
    <reaction evidence="2">
        <text>carbamoyl phosphate + L-ornithine = L-citrulline + phosphate + H(+)</text>
        <dbReference type="Rhea" id="RHEA:19513"/>
        <dbReference type="ChEBI" id="CHEBI:15378"/>
        <dbReference type="ChEBI" id="CHEBI:43474"/>
        <dbReference type="ChEBI" id="CHEBI:46911"/>
        <dbReference type="ChEBI" id="CHEBI:57743"/>
        <dbReference type="ChEBI" id="CHEBI:58228"/>
        <dbReference type="EC" id="2.1.3.3"/>
    </reaction>
</comment>
<comment type="pathway">
    <text evidence="2">Amino-acid biosynthesis; L-arginine biosynthesis; L-arginine from L-ornithine and carbamoyl phosphate: step 1/3.</text>
</comment>
<comment type="subcellular location">
    <subcellularLocation>
        <location evidence="2">Cytoplasm</location>
    </subcellularLocation>
</comment>
<comment type="similarity">
    <text evidence="2">Belongs to the aspartate/ornithine carbamoyltransferase superfamily. OTCase family.</text>
</comment>